<name>HIS1_ACISJ</name>
<evidence type="ECO:0000255" key="1">
    <source>
        <dbReference type="HAMAP-Rule" id="MF_01018"/>
    </source>
</evidence>
<organism>
    <name type="scientific">Acidovorax sp. (strain JS42)</name>
    <dbReference type="NCBI Taxonomy" id="232721"/>
    <lineage>
        <taxon>Bacteria</taxon>
        <taxon>Pseudomonadati</taxon>
        <taxon>Pseudomonadota</taxon>
        <taxon>Betaproteobacteria</taxon>
        <taxon>Burkholderiales</taxon>
        <taxon>Comamonadaceae</taxon>
        <taxon>Acidovorax</taxon>
    </lineage>
</organism>
<proteinExistence type="inferred from homology"/>
<feature type="chain" id="PRO_0000319508" description="ATP phosphoribosyltransferase">
    <location>
        <begin position="1"/>
        <end position="216"/>
    </location>
</feature>
<comment type="function">
    <text evidence="1">Catalyzes the condensation of ATP and 5-phosphoribose 1-diphosphate to form N'-(5'-phosphoribosyl)-ATP (PR-ATP). Has a crucial role in the pathway because the rate of histidine biosynthesis seems to be controlled primarily by regulation of HisG enzymatic activity.</text>
</comment>
<comment type="catalytic activity">
    <reaction evidence="1">
        <text>1-(5-phospho-beta-D-ribosyl)-ATP + diphosphate = 5-phospho-alpha-D-ribose 1-diphosphate + ATP</text>
        <dbReference type="Rhea" id="RHEA:18473"/>
        <dbReference type="ChEBI" id="CHEBI:30616"/>
        <dbReference type="ChEBI" id="CHEBI:33019"/>
        <dbReference type="ChEBI" id="CHEBI:58017"/>
        <dbReference type="ChEBI" id="CHEBI:73183"/>
        <dbReference type="EC" id="2.4.2.17"/>
    </reaction>
</comment>
<comment type="pathway">
    <text evidence="1">Amino-acid biosynthesis; L-histidine biosynthesis; L-histidine from 5-phospho-alpha-D-ribose 1-diphosphate: step 1/9.</text>
</comment>
<comment type="subunit">
    <text evidence="1">Heteromultimer composed of HisG and HisZ subunits.</text>
</comment>
<comment type="subcellular location">
    <subcellularLocation>
        <location evidence="1">Cytoplasm</location>
    </subcellularLocation>
</comment>
<comment type="domain">
    <text>Lacks the C-terminal regulatory region which is replaced by HisZ.</text>
</comment>
<comment type="similarity">
    <text evidence="1">Belongs to the ATP phosphoribosyltransferase family. Short subfamily.</text>
</comment>
<reference key="1">
    <citation type="submission" date="2006-12" db="EMBL/GenBank/DDBJ databases">
        <title>Complete sequence of chromosome 1 of Acidovorax sp. JS42.</title>
        <authorList>
            <person name="Copeland A."/>
            <person name="Lucas S."/>
            <person name="Lapidus A."/>
            <person name="Barry K."/>
            <person name="Detter J.C."/>
            <person name="Glavina del Rio T."/>
            <person name="Dalin E."/>
            <person name="Tice H."/>
            <person name="Pitluck S."/>
            <person name="Chertkov O."/>
            <person name="Brettin T."/>
            <person name="Bruce D."/>
            <person name="Han C."/>
            <person name="Tapia R."/>
            <person name="Gilna P."/>
            <person name="Schmutz J."/>
            <person name="Larimer F."/>
            <person name="Land M."/>
            <person name="Hauser L."/>
            <person name="Kyrpides N."/>
            <person name="Kim E."/>
            <person name="Stahl D."/>
            <person name="Richardson P."/>
        </authorList>
    </citation>
    <scope>NUCLEOTIDE SEQUENCE [LARGE SCALE GENOMIC DNA]</scope>
    <source>
        <strain>JS42</strain>
    </source>
</reference>
<keyword id="KW-0028">Amino-acid biosynthesis</keyword>
<keyword id="KW-0067">ATP-binding</keyword>
<keyword id="KW-0963">Cytoplasm</keyword>
<keyword id="KW-0328">Glycosyltransferase</keyword>
<keyword id="KW-0368">Histidine biosynthesis</keyword>
<keyword id="KW-0547">Nucleotide-binding</keyword>
<keyword id="KW-0808">Transferase</keyword>
<gene>
    <name evidence="1" type="primary">hisG</name>
    <name type="ordered locus">Ajs_0759</name>
</gene>
<dbReference type="EC" id="2.4.2.17" evidence="1"/>
<dbReference type="EMBL" id="CP000539">
    <property type="protein sequence ID" value="ABM41003.1"/>
    <property type="molecule type" value="Genomic_DNA"/>
</dbReference>
<dbReference type="SMR" id="A1W428"/>
<dbReference type="STRING" id="232721.Ajs_0759"/>
<dbReference type="KEGG" id="ajs:Ajs_0759"/>
<dbReference type="eggNOG" id="COG0040">
    <property type="taxonomic scope" value="Bacteria"/>
</dbReference>
<dbReference type="HOGENOM" id="CLU_038115_2_0_4"/>
<dbReference type="UniPathway" id="UPA00031">
    <property type="reaction ID" value="UER00006"/>
</dbReference>
<dbReference type="Proteomes" id="UP000000645">
    <property type="component" value="Chromosome"/>
</dbReference>
<dbReference type="GO" id="GO:0005737">
    <property type="term" value="C:cytoplasm"/>
    <property type="evidence" value="ECO:0007669"/>
    <property type="project" value="UniProtKB-SubCell"/>
</dbReference>
<dbReference type="GO" id="GO:0005524">
    <property type="term" value="F:ATP binding"/>
    <property type="evidence" value="ECO:0007669"/>
    <property type="project" value="UniProtKB-KW"/>
</dbReference>
<dbReference type="GO" id="GO:0003879">
    <property type="term" value="F:ATP phosphoribosyltransferase activity"/>
    <property type="evidence" value="ECO:0007669"/>
    <property type="project" value="UniProtKB-UniRule"/>
</dbReference>
<dbReference type="GO" id="GO:0000105">
    <property type="term" value="P:L-histidine biosynthetic process"/>
    <property type="evidence" value="ECO:0007669"/>
    <property type="project" value="UniProtKB-UniRule"/>
</dbReference>
<dbReference type="CDD" id="cd13595">
    <property type="entry name" value="PBP2_HisGs"/>
    <property type="match status" value="1"/>
</dbReference>
<dbReference type="FunFam" id="3.40.190.10:FF:000008">
    <property type="entry name" value="ATP phosphoribosyltransferase"/>
    <property type="match status" value="1"/>
</dbReference>
<dbReference type="Gene3D" id="3.40.190.10">
    <property type="entry name" value="Periplasmic binding protein-like II"/>
    <property type="match status" value="2"/>
</dbReference>
<dbReference type="HAMAP" id="MF_01018">
    <property type="entry name" value="HisG_Short"/>
    <property type="match status" value="1"/>
</dbReference>
<dbReference type="InterPro" id="IPR013820">
    <property type="entry name" value="ATP_PRibTrfase_cat"/>
</dbReference>
<dbReference type="InterPro" id="IPR018198">
    <property type="entry name" value="ATP_PRibTrfase_CS"/>
</dbReference>
<dbReference type="InterPro" id="IPR001348">
    <property type="entry name" value="ATP_PRibTrfase_HisG"/>
</dbReference>
<dbReference type="InterPro" id="IPR024893">
    <property type="entry name" value="ATP_PRibTrfase_HisG_short"/>
</dbReference>
<dbReference type="NCBIfam" id="TIGR00070">
    <property type="entry name" value="hisG"/>
    <property type="match status" value="1"/>
</dbReference>
<dbReference type="PANTHER" id="PTHR21403:SF8">
    <property type="entry name" value="ATP PHOSPHORIBOSYLTRANSFERASE"/>
    <property type="match status" value="1"/>
</dbReference>
<dbReference type="PANTHER" id="PTHR21403">
    <property type="entry name" value="ATP PHOSPHORIBOSYLTRANSFERASE ATP-PRTASE"/>
    <property type="match status" value="1"/>
</dbReference>
<dbReference type="Pfam" id="PF01634">
    <property type="entry name" value="HisG"/>
    <property type="match status" value="1"/>
</dbReference>
<dbReference type="SUPFAM" id="SSF53850">
    <property type="entry name" value="Periplasmic binding protein-like II"/>
    <property type="match status" value="1"/>
</dbReference>
<dbReference type="PROSITE" id="PS01316">
    <property type="entry name" value="ATP_P_PHORIBOSYLTR"/>
    <property type="match status" value="1"/>
</dbReference>
<accession>A1W428</accession>
<protein>
    <recommendedName>
        <fullName evidence="1">ATP phosphoribosyltransferase</fullName>
        <shortName evidence="1">ATP-PRT</shortName>
        <shortName evidence="1">ATP-PRTase</shortName>
        <ecNumber evidence="1">2.4.2.17</ecNumber>
    </recommendedName>
</protein>
<sequence length="216" mass="23336">MTQQITLALSKGRIFEETLPLLAAAGIEVLEDPEKSRKLILPTSRPEVRVVLVRATDVPTYVQYGGADLGVAGKDSLIEHGGQGLFRPLDLKIAKCRVSVAVRADFDYREAVTQGSRLKVATKYTSIARDFFASKGVHVDLIKLYGSMELAPLTGLADAIVDLVSTGNTLKANNLVEVEQIMDISSHLVVNQAALKLKQAPLRRIIDAFASAVPQG</sequence>